<dbReference type="EC" id="3.2.1.14"/>
<dbReference type="EMBL" id="U28373">
    <property type="protein sequence ID" value="AAB64807.1"/>
    <property type="molecule type" value="Genomic_DNA"/>
</dbReference>
<dbReference type="EMBL" id="BK006938">
    <property type="protein sequence ID" value="DAA12212.1"/>
    <property type="molecule type" value="Genomic_DNA"/>
</dbReference>
<dbReference type="PIR" id="S61166">
    <property type="entry name" value="S61166"/>
</dbReference>
<dbReference type="RefSeq" id="NP_010659.1">
    <property type="nucleotide sequence ID" value="NM_001180679.1"/>
</dbReference>
<dbReference type="SMR" id="Q06350"/>
<dbReference type="BioGRID" id="32430">
    <property type="interactions" value="73"/>
</dbReference>
<dbReference type="DIP" id="DIP-5251N"/>
<dbReference type="FunCoup" id="Q06350">
    <property type="interactions" value="766"/>
</dbReference>
<dbReference type="IntAct" id="Q06350">
    <property type="interactions" value="3"/>
</dbReference>
<dbReference type="STRING" id="4932.YDR371W"/>
<dbReference type="CAZy" id="GH18">
    <property type="family name" value="Glycoside Hydrolase Family 18"/>
</dbReference>
<dbReference type="GlyCosmos" id="Q06350">
    <property type="glycosylation" value="4 sites, No reported glycans"/>
</dbReference>
<dbReference type="GlyGen" id="Q06350">
    <property type="glycosylation" value="4 sites"/>
</dbReference>
<dbReference type="PaxDb" id="4932-YDR371W"/>
<dbReference type="PeptideAtlas" id="Q06350"/>
<dbReference type="EnsemblFungi" id="YDR371W_mRNA">
    <property type="protein sequence ID" value="YDR371W"/>
    <property type="gene ID" value="YDR371W"/>
</dbReference>
<dbReference type="GeneID" id="851977"/>
<dbReference type="KEGG" id="sce:YDR371W"/>
<dbReference type="AGR" id="SGD:S000002779"/>
<dbReference type="SGD" id="S000002779">
    <property type="gene designation" value="CTS2"/>
</dbReference>
<dbReference type="VEuPathDB" id="FungiDB:YDR371W"/>
<dbReference type="eggNOG" id="KOG2806">
    <property type="taxonomic scope" value="Eukaryota"/>
</dbReference>
<dbReference type="GeneTree" id="ENSGT00940000175593"/>
<dbReference type="HOGENOM" id="CLU_002833_1_2_1"/>
<dbReference type="InParanoid" id="Q06350"/>
<dbReference type="OMA" id="SYPESKY"/>
<dbReference type="OrthoDB" id="76388at2759"/>
<dbReference type="BioCyc" id="YEAST:G3O-29921-MONOMER"/>
<dbReference type="Reactome" id="R-SCE-189085">
    <property type="pathway name" value="Digestion of dietary carbohydrate"/>
</dbReference>
<dbReference type="Reactome" id="R-SCE-6798695">
    <property type="pathway name" value="Neutrophil degranulation"/>
</dbReference>
<dbReference type="BioGRID-ORCS" id="851977">
    <property type="hits" value="0 hits in 10 CRISPR screens"/>
</dbReference>
<dbReference type="PRO" id="PR:Q06350"/>
<dbReference type="Proteomes" id="UP000002311">
    <property type="component" value="Chromosome IV"/>
</dbReference>
<dbReference type="RNAct" id="Q06350">
    <property type="molecule type" value="protein"/>
</dbReference>
<dbReference type="GO" id="GO:0005737">
    <property type="term" value="C:cytoplasm"/>
    <property type="evidence" value="ECO:0007005"/>
    <property type="project" value="SGD"/>
</dbReference>
<dbReference type="GO" id="GO:0005576">
    <property type="term" value="C:extracellular region"/>
    <property type="evidence" value="ECO:0000318"/>
    <property type="project" value="GO_Central"/>
</dbReference>
<dbReference type="GO" id="GO:0008061">
    <property type="term" value="F:chitin binding"/>
    <property type="evidence" value="ECO:0007669"/>
    <property type="project" value="InterPro"/>
</dbReference>
<dbReference type="GO" id="GO:0004568">
    <property type="term" value="F:chitinase activity"/>
    <property type="evidence" value="ECO:0000318"/>
    <property type="project" value="GO_Central"/>
</dbReference>
<dbReference type="GO" id="GO:0008843">
    <property type="term" value="F:endochitinase activity"/>
    <property type="evidence" value="ECO:0000314"/>
    <property type="project" value="SGD"/>
</dbReference>
<dbReference type="GO" id="GO:0035885">
    <property type="term" value="F:exochitinase activity"/>
    <property type="evidence" value="ECO:0000314"/>
    <property type="project" value="SGD"/>
</dbReference>
<dbReference type="GO" id="GO:0006032">
    <property type="term" value="P:chitin catabolic process"/>
    <property type="evidence" value="ECO:0000318"/>
    <property type="project" value="GO_Central"/>
</dbReference>
<dbReference type="GO" id="GO:0000272">
    <property type="term" value="P:polysaccharide catabolic process"/>
    <property type="evidence" value="ECO:0007669"/>
    <property type="project" value="UniProtKB-KW"/>
</dbReference>
<dbReference type="GO" id="GO:0030435">
    <property type="term" value="P:sporulation resulting in formation of a cellular spore"/>
    <property type="evidence" value="ECO:0000316"/>
    <property type="project" value="SGD"/>
</dbReference>
<dbReference type="CDD" id="cd06548">
    <property type="entry name" value="GH18_chitinase"/>
    <property type="match status" value="1"/>
</dbReference>
<dbReference type="FunFam" id="3.10.50.10:FF:000009">
    <property type="entry name" value="CTS2p putative chitinase"/>
    <property type="match status" value="1"/>
</dbReference>
<dbReference type="FunFam" id="3.20.20.80:FF:000075">
    <property type="entry name" value="Sporulation-specific chitinase"/>
    <property type="match status" value="1"/>
</dbReference>
<dbReference type="Gene3D" id="3.10.50.10">
    <property type="match status" value="1"/>
</dbReference>
<dbReference type="Gene3D" id="3.20.20.80">
    <property type="entry name" value="Glycosidases"/>
    <property type="match status" value="1"/>
</dbReference>
<dbReference type="InterPro" id="IPR011583">
    <property type="entry name" value="Chitinase_II/V-like_cat"/>
</dbReference>
<dbReference type="InterPro" id="IPR029070">
    <property type="entry name" value="Chitinase_insertion_sf"/>
</dbReference>
<dbReference type="InterPro" id="IPR001223">
    <property type="entry name" value="Glyco_hydro18_cat"/>
</dbReference>
<dbReference type="InterPro" id="IPR001579">
    <property type="entry name" value="Glyco_hydro_18_chit_AS"/>
</dbReference>
<dbReference type="InterPro" id="IPR017853">
    <property type="entry name" value="Glycoside_hydrolase_SF"/>
</dbReference>
<dbReference type="InterPro" id="IPR050314">
    <property type="entry name" value="Glycosyl_Hydrlase_18"/>
</dbReference>
<dbReference type="PANTHER" id="PTHR11177">
    <property type="entry name" value="CHITINASE"/>
    <property type="match status" value="1"/>
</dbReference>
<dbReference type="PANTHER" id="PTHR11177:SF317">
    <property type="entry name" value="CHITINASE 12-RELATED"/>
    <property type="match status" value="1"/>
</dbReference>
<dbReference type="Pfam" id="PF00704">
    <property type="entry name" value="Glyco_hydro_18"/>
    <property type="match status" value="1"/>
</dbReference>
<dbReference type="SMART" id="SM00636">
    <property type="entry name" value="Glyco_18"/>
    <property type="match status" value="1"/>
</dbReference>
<dbReference type="SUPFAM" id="SSF51445">
    <property type="entry name" value="(Trans)glycosidases"/>
    <property type="match status" value="1"/>
</dbReference>
<dbReference type="SUPFAM" id="SSF54556">
    <property type="entry name" value="Chitinase insertion domain"/>
    <property type="match status" value="1"/>
</dbReference>
<dbReference type="PROSITE" id="PS01095">
    <property type="entry name" value="GH18_1"/>
    <property type="match status" value="1"/>
</dbReference>
<dbReference type="PROSITE" id="PS51910">
    <property type="entry name" value="GH18_2"/>
    <property type="match status" value="1"/>
</dbReference>
<protein>
    <recommendedName>
        <fullName>Sporulation-specific chitinase 2</fullName>
        <ecNumber>3.2.1.14</ecNumber>
    </recommendedName>
</protein>
<organism>
    <name type="scientific">Saccharomyces cerevisiae (strain ATCC 204508 / S288c)</name>
    <name type="common">Baker's yeast</name>
    <dbReference type="NCBI Taxonomy" id="559292"/>
    <lineage>
        <taxon>Eukaryota</taxon>
        <taxon>Fungi</taxon>
        <taxon>Dikarya</taxon>
        <taxon>Ascomycota</taxon>
        <taxon>Saccharomycotina</taxon>
        <taxon>Saccharomycetes</taxon>
        <taxon>Saccharomycetales</taxon>
        <taxon>Saccharomycetaceae</taxon>
        <taxon>Saccharomyces</taxon>
    </lineage>
</organism>
<evidence type="ECO:0000255" key="1"/>
<evidence type="ECO:0000255" key="2">
    <source>
        <dbReference type="PROSITE-ProRule" id="PRU01258"/>
    </source>
</evidence>
<evidence type="ECO:0000269" key="3">
    <source>
    </source>
</evidence>
<evidence type="ECO:0000305" key="4"/>
<reference key="1">
    <citation type="journal article" date="1997" name="Nature">
        <title>The nucleotide sequence of Saccharomyces cerevisiae chromosome IV.</title>
        <authorList>
            <person name="Jacq C."/>
            <person name="Alt-Moerbe J."/>
            <person name="Andre B."/>
            <person name="Arnold W."/>
            <person name="Bahr A."/>
            <person name="Ballesta J.P.G."/>
            <person name="Bargues M."/>
            <person name="Baron L."/>
            <person name="Becker A."/>
            <person name="Biteau N."/>
            <person name="Bloecker H."/>
            <person name="Blugeon C."/>
            <person name="Boskovic J."/>
            <person name="Brandt P."/>
            <person name="Brueckner M."/>
            <person name="Buitrago M.J."/>
            <person name="Coster F."/>
            <person name="Delaveau T."/>
            <person name="del Rey F."/>
            <person name="Dujon B."/>
            <person name="Eide L.G."/>
            <person name="Garcia-Cantalejo J.M."/>
            <person name="Goffeau A."/>
            <person name="Gomez-Peris A."/>
            <person name="Granotier C."/>
            <person name="Hanemann V."/>
            <person name="Hankeln T."/>
            <person name="Hoheisel J.D."/>
            <person name="Jaeger W."/>
            <person name="Jimenez A."/>
            <person name="Jonniaux J.-L."/>
            <person name="Kraemer C."/>
            <person name="Kuester H."/>
            <person name="Laamanen P."/>
            <person name="Legros Y."/>
            <person name="Louis E.J."/>
            <person name="Moeller-Rieker S."/>
            <person name="Monnet A."/>
            <person name="Moro M."/>
            <person name="Mueller-Auer S."/>
            <person name="Nussbaumer B."/>
            <person name="Paricio N."/>
            <person name="Paulin L."/>
            <person name="Perea J."/>
            <person name="Perez-Alonso M."/>
            <person name="Perez-Ortin J.E."/>
            <person name="Pohl T.M."/>
            <person name="Prydz H."/>
            <person name="Purnelle B."/>
            <person name="Rasmussen S.W."/>
            <person name="Remacha M.A."/>
            <person name="Revuelta J.L."/>
            <person name="Rieger M."/>
            <person name="Salom D."/>
            <person name="Saluz H.P."/>
            <person name="Saiz J.E."/>
            <person name="Saren A.-M."/>
            <person name="Schaefer M."/>
            <person name="Scharfe M."/>
            <person name="Schmidt E.R."/>
            <person name="Schneider C."/>
            <person name="Scholler P."/>
            <person name="Schwarz S."/>
            <person name="Soler-Mira A."/>
            <person name="Urrestarazu L.A."/>
            <person name="Verhasselt P."/>
            <person name="Vissers S."/>
            <person name="Voet M."/>
            <person name="Volckaert G."/>
            <person name="Wagner G."/>
            <person name="Wambutt R."/>
            <person name="Wedler E."/>
            <person name="Wedler H."/>
            <person name="Woelfl S."/>
            <person name="Harris D.E."/>
            <person name="Bowman S."/>
            <person name="Brown D."/>
            <person name="Churcher C.M."/>
            <person name="Connor R."/>
            <person name="Dedman K."/>
            <person name="Gentles S."/>
            <person name="Hamlin N."/>
            <person name="Hunt S."/>
            <person name="Jones L."/>
            <person name="McDonald S."/>
            <person name="Murphy L.D."/>
            <person name="Niblett D."/>
            <person name="Odell C."/>
            <person name="Oliver K."/>
            <person name="Rajandream M.A."/>
            <person name="Richards C."/>
            <person name="Shore L."/>
            <person name="Walsh S.V."/>
            <person name="Barrell B.G."/>
            <person name="Dietrich F.S."/>
            <person name="Mulligan J.T."/>
            <person name="Allen E."/>
            <person name="Araujo R."/>
            <person name="Aviles E."/>
            <person name="Berno A."/>
            <person name="Carpenter J."/>
            <person name="Chen E."/>
            <person name="Cherry J.M."/>
            <person name="Chung E."/>
            <person name="Duncan M."/>
            <person name="Hunicke-Smith S."/>
            <person name="Hyman R.W."/>
            <person name="Komp C."/>
            <person name="Lashkari D."/>
            <person name="Lew H."/>
            <person name="Lin D."/>
            <person name="Mosedale D."/>
            <person name="Nakahara K."/>
            <person name="Namath A."/>
            <person name="Oefner P."/>
            <person name="Oh C."/>
            <person name="Petel F.X."/>
            <person name="Roberts D."/>
            <person name="Schramm S."/>
            <person name="Schroeder M."/>
            <person name="Shogren T."/>
            <person name="Shroff N."/>
            <person name="Winant A."/>
            <person name="Yelton M.A."/>
            <person name="Botstein D."/>
            <person name="Davis R.W."/>
            <person name="Johnston M."/>
            <person name="Andrews S."/>
            <person name="Brinkman R."/>
            <person name="Cooper J."/>
            <person name="Ding H."/>
            <person name="Du Z."/>
            <person name="Favello A."/>
            <person name="Fulton L."/>
            <person name="Gattung S."/>
            <person name="Greco T."/>
            <person name="Hallsworth K."/>
            <person name="Hawkins J."/>
            <person name="Hillier L.W."/>
            <person name="Jier M."/>
            <person name="Johnson D."/>
            <person name="Johnston L."/>
            <person name="Kirsten J."/>
            <person name="Kucaba T."/>
            <person name="Langston Y."/>
            <person name="Latreille P."/>
            <person name="Le T."/>
            <person name="Mardis E."/>
            <person name="Menezes S."/>
            <person name="Miller N."/>
            <person name="Nhan M."/>
            <person name="Pauley A."/>
            <person name="Peluso D."/>
            <person name="Rifkin L."/>
            <person name="Riles L."/>
            <person name="Taich A."/>
            <person name="Trevaskis E."/>
            <person name="Vignati D."/>
            <person name="Wilcox L."/>
            <person name="Wohldman P."/>
            <person name="Vaudin M."/>
            <person name="Wilson R."/>
            <person name="Waterston R."/>
            <person name="Albermann K."/>
            <person name="Hani J."/>
            <person name="Heumann K."/>
            <person name="Kleine K."/>
            <person name="Mewes H.-W."/>
            <person name="Zollner A."/>
            <person name="Zaccaria P."/>
        </authorList>
    </citation>
    <scope>NUCLEOTIDE SEQUENCE [LARGE SCALE GENOMIC DNA]</scope>
    <source>
        <strain>ATCC 204508 / S288c</strain>
    </source>
</reference>
<reference key="2">
    <citation type="journal article" date="2014" name="G3 (Bethesda)">
        <title>The reference genome sequence of Saccharomyces cerevisiae: Then and now.</title>
        <authorList>
            <person name="Engel S.R."/>
            <person name="Dietrich F.S."/>
            <person name="Fisk D.G."/>
            <person name="Binkley G."/>
            <person name="Balakrishnan R."/>
            <person name="Costanzo M.C."/>
            <person name="Dwight S.S."/>
            <person name="Hitz B.C."/>
            <person name="Karra K."/>
            <person name="Nash R.S."/>
            <person name="Weng S."/>
            <person name="Wong E.D."/>
            <person name="Lloyd P."/>
            <person name="Skrzypek M.S."/>
            <person name="Miyasato S.R."/>
            <person name="Simison M."/>
            <person name="Cherry J.M."/>
        </authorList>
    </citation>
    <scope>GENOME REANNOTATION</scope>
    <source>
        <strain>ATCC 204508 / S288c</strain>
    </source>
</reference>
<reference key="3">
    <citation type="journal article" date="2003" name="Nature">
        <title>Global analysis of protein expression in yeast.</title>
        <authorList>
            <person name="Ghaemmaghami S."/>
            <person name="Huh W.-K."/>
            <person name="Bower K."/>
            <person name="Howson R.W."/>
            <person name="Belle A."/>
            <person name="Dephoure N."/>
            <person name="O'Shea E.K."/>
            <person name="Weissman J.S."/>
        </authorList>
    </citation>
    <scope>LEVEL OF PROTEIN EXPRESSION [LARGE SCALE ANALYSIS]</scope>
</reference>
<gene>
    <name type="primary">CTS2</name>
    <name type="ordered locus">YDR371W</name>
    <name type="ORF">D9481.7</name>
</gene>
<keyword id="KW-0119">Carbohydrate metabolism</keyword>
<keyword id="KW-0146">Chitin degradation</keyword>
<keyword id="KW-0325">Glycoprotein</keyword>
<keyword id="KW-0326">Glycosidase</keyword>
<keyword id="KW-0378">Hydrolase</keyword>
<keyword id="KW-0624">Polysaccharide degradation</keyword>
<keyword id="KW-1185">Reference proteome</keyword>
<keyword id="KW-0964">Secreted</keyword>
<keyword id="KW-0732">Signal</keyword>
<keyword id="KW-0749">Sporulation</keyword>
<accession>Q06350</accession>
<accession>D6VT02</accession>
<sequence>MVGHSAQHRSKSSLVSHLLILLIFITIIIEMCLYNKIFKNQRSDDIRDNFNNGGHRVPSNVQNHGTHIRDEAFISGVYYSNWSPYKPRFHFPHDINLKQVSHIYYAFFKINSRTGGIENTDSWSDLEMNLYKSLAIKNSELIKESSNNSVQNILPLGCIGELFYLKNTCSDKKFKVIMSIGGWSDSENFKIIIKDDKLLQNFVDSSVETMFRLGFDGIDLDWEFPGNNESEPRGYLKLVRMLRLKLNSLESQIFGKRTEDHFQLSIAAPAFKDKLFYLPITEIDQYVDYWNMMTYDYYGSWSETTGYHSNLFSETELNGNFAMHYMIDRFGVNSRKLVLGMAAYGRSFHIKDNKFEPFNQNTVLINKIFKGVGKPTKEIDKADGKEGIWPYKNLPKIGTIEQYDPKYVSAYCFDEKNSIFISYDNTKSVKTKAEYVTHNNLGGGFWWESCGEAYANESRSLINAFNEGLHFNVSSKPSIFQDVRVKKYYLNKYGDGGFLSPYLKHLDSRKQ</sequence>
<feature type="signal peptide" evidence="1">
    <location>
        <begin position="1"/>
        <end position="34"/>
    </location>
</feature>
<feature type="chain" id="PRO_0000011937" description="Sporulation-specific chitinase 2">
    <location>
        <begin position="35"/>
        <end position="511"/>
    </location>
</feature>
<feature type="domain" description="GH18" evidence="2">
    <location>
        <begin position="73"/>
        <end position="472"/>
    </location>
</feature>
<feature type="active site" description="Proton donor" evidence="2">
    <location>
        <position position="223"/>
    </location>
</feature>
<feature type="glycosylation site" description="N-linked (GlcNAc...) asparagine" evidence="1">
    <location>
        <position position="147"/>
    </location>
</feature>
<feature type="glycosylation site" description="N-linked (GlcNAc...) asparagine" evidence="1">
    <location>
        <position position="228"/>
    </location>
</feature>
<feature type="glycosylation site" description="N-linked (GlcNAc...) asparagine" evidence="1">
    <location>
        <position position="456"/>
    </location>
</feature>
<feature type="glycosylation site" description="N-linked (GlcNAc...) asparagine" evidence="1">
    <location>
        <position position="472"/>
    </location>
</feature>
<name>CHI2_YEAST</name>
<proteinExistence type="evidence at protein level"/>
<comment type="catalytic activity">
    <reaction>
        <text>Random endo-hydrolysis of N-acetyl-beta-D-glucosaminide (1-&gt;4)-beta-linkages in chitin and chitodextrins.</text>
        <dbReference type="EC" id="3.2.1.14"/>
    </reaction>
</comment>
<comment type="subcellular location">
    <subcellularLocation>
        <location evidence="4">Secreted</location>
    </subcellularLocation>
</comment>
<comment type="miscellaneous">
    <text evidence="3">Present with 3050 molecules/cell in log phase SD medium.</text>
</comment>
<comment type="similarity">
    <text evidence="4">Belongs to the glycosyl hydrolase 18 family. Chitinase class III subfamily.</text>
</comment>